<comment type="function">
    <text evidence="1">Cleaves viral precursor proteins (pTP, pIIIa, pVI, pVII, pVIII, and pX) inside newly assembled particles giving rise to mature virions. Protease complexed to its cofactor slides along the viral DNA to specifically locate and cleave the viral precursors. Mature virions have a weakened organization compared to the unmature virions, thereby facilitating subsequent uncoating. Without maturation, the particle lacks infectivity and is unable to uncoat. Late in adenovirus infection, in the cytoplasm, may participate in the cytoskeleton destruction. Cleaves host cell cytoskeletal keratins K7 and K18.</text>
</comment>
<comment type="catalytic activity">
    <reaction evidence="1">
        <text>Cleaves proteins of the adenovirus and its host cell at two consensus sites: -Yaa-Xaa-Gly-Gly-|-Xaa- and -Yaa-Xaa-Gly-Xaa-|-Gly- (in which Yaa is Met, Ile or Leu, and Xaa is any amino acid).</text>
        <dbReference type="EC" id="3.4.22.39"/>
    </reaction>
</comment>
<comment type="activity regulation">
    <text evidence="1">Requires DNA and protease cofactor for maximal activation. Inside nascent virions, becomes partially activated by binding to the viral DNA, allowing it to cleave the cofactor that binds to the protease and fully activates it. Actin, like the viral protease cofactor, seems to act as a cofactor in the cleavage of cytokeratin 18 and of actin itself.</text>
</comment>
<comment type="subunit">
    <text evidence="1">Interacts with protease cofactor pVI-C; this interaction is necessary for protease activation.</text>
</comment>
<comment type="subcellular location">
    <subcellularLocation>
        <location evidence="1">Virion</location>
    </subcellularLocation>
    <subcellularLocation>
        <location evidence="1">Host nucleus</location>
    </subcellularLocation>
    <text evidence="1">Present in about 10 copies per virion.</text>
</comment>
<comment type="induction">
    <text evidence="1">Expressed in the late phase of the viral replicative cycle.</text>
</comment>
<comment type="miscellaneous">
    <text evidence="1">All late proteins expressed from the major late promoter are produced by alternative splicing and alternative polyadenylation of the same gene giving rise to non-overlapping ORFs. A leader sequence is present in the N-terminus of all these mRNAs and is recognized by the viral shutoff protein to provide expression although conventional translation via ribosome scanning from the cap has been shut off in the host cell.</text>
</comment>
<comment type="similarity">
    <text evidence="1">Belongs to the peptidase C5 family.</text>
</comment>
<feature type="chain" id="PRO_0000218032" description="Protease">
    <location>
        <begin position="1"/>
        <end position="205"/>
    </location>
</feature>
<feature type="active site" evidence="1">
    <location>
        <position position="54"/>
    </location>
</feature>
<feature type="active site" evidence="1">
    <location>
        <position position="71"/>
    </location>
</feature>
<feature type="active site" evidence="1">
    <location>
        <position position="120"/>
    </location>
</feature>
<feature type="site" description="Cleavage; by autolysis" evidence="1">
    <location>
        <begin position="51"/>
        <end position="52"/>
    </location>
</feature>
<feature type="disulfide bond" description="Interchain (with C-10 in cleaved protease cofactor pVI-C)" evidence="1">
    <location>
        <position position="102"/>
    </location>
</feature>
<organismHost>
    <name type="scientific">Bos taurus</name>
    <name type="common">Bovine</name>
    <dbReference type="NCBI Taxonomy" id="9913"/>
</organismHost>
<name>PRO_ADEB2</name>
<sequence>MGSREEELRAIVRDLGISPYFLGTFDKRFPGFLHKDKLSCAIVNTAARETGGAHWLALAWFPNAKNFYFFDPFGFSDHKLKQIYQFEYEGLLRRSALAGDGCVNLVKSTETVQGPNSAACGLFCCMFLHAFVNWPDRPMTRNPTMDLLTGVPNADMMKPSSLAILRENQNQLYKFLSTHSQYFRTHRPQIERDTSFNKLLELKNQ</sequence>
<proteinExistence type="inferred from homology"/>
<organism>
    <name type="scientific">Bovine adenovirus 2</name>
    <name type="common">BAdV-2</name>
    <name type="synonym">Mastadenovirus bos2</name>
    <dbReference type="NCBI Taxonomy" id="114429"/>
    <lineage>
        <taxon>Viruses</taxon>
        <taxon>Varidnaviria</taxon>
        <taxon>Bamfordvirae</taxon>
        <taxon>Preplasmiviricota</taxon>
        <taxon>Tectiliviricetes</taxon>
        <taxon>Rowavirales</taxon>
        <taxon>Adenoviridae</taxon>
        <taxon>Mastadenovirus</taxon>
        <taxon>Ovine mastadenovirus A</taxon>
    </lineage>
</organism>
<keyword id="KW-0068">Autocatalytic cleavage</keyword>
<keyword id="KW-1015">Disulfide bond</keyword>
<keyword id="KW-0238">DNA-binding</keyword>
<keyword id="KW-1048">Host nucleus</keyword>
<keyword id="KW-0378">Hydrolase</keyword>
<keyword id="KW-0426">Late protein</keyword>
<keyword id="KW-0645">Protease</keyword>
<keyword id="KW-0788">Thiol protease</keyword>
<keyword id="KW-0946">Virion</keyword>
<protein>
    <recommendedName>
        <fullName evidence="1">Protease</fullName>
        <ecNumber evidence="1">3.4.22.39</ecNumber>
    </recommendedName>
    <alternativeName>
        <fullName evidence="1">Adenain</fullName>
    </alternativeName>
    <alternativeName>
        <fullName evidence="1">Adenovirus protease</fullName>
        <shortName evidence="1">AVP</shortName>
    </alternativeName>
    <alternativeName>
        <fullName evidence="1">Adenovirus proteinase</fullName>
    </alternativeName>
    <alternativeName>
        <fullName evidence="1">Endoprotease</fullName>
    </alternativeName>
</protein>
<dbReference type="EC" id="3.4.22.39" evidence="1"/>
<dbReference type="EMBL" id="U44124">
    <property type="protein sequence ID" value="AAB16761.1"/>
    <property type="molecule type" value="Genomic_DNA"/>
</dbReference>
<dbReference type="SMR" id="Q96629"/>
<dbReference type="MEROPS" id="C05.001"/>
<dbReference type="GO" id="GO:0042025">
    <property type="term" value="C:host cell nucleus"/>
    <property type="evidence" value="ECO:0007669"/>
    <property type="project" value="UniProtKB-SubCell"/>
</dbReference>
<dbReference type="GO" id="GO:0044423">
    <property type="term" value="C:virion component"/>
    <property type="evidence" value="ECO:0007669"/>
    <property type="project" value="UniProtKB-UniRule"/>
</dbReference>
<dbReference type="GO" id="GO:0004197">
    <property type="term" value="F:cysteine-type endopeptidase activity"/>
    <property type="evidence" value="ECO:0007669"/>
    <property type="project" value="UniProtKB-UniRule"/>
</dbReference>
<dbReference type="GO" id="GO:0003677">
    <property type="term" value="F:DNA binding"/>
    <property type="evidence" value="ECO:0007669"/>
    <property type="project" value="UniProtKB-UniRule"/>
</dbReference>
<dbReference type="GO" id="GO:0006508">
    <property type="term" value="P:proteolysis"/>
    <property type="evidence" value="ECO:0007669"/>
    <property type="project" value="UniProtKB-KW"/>
</dbReference>
<dbReference type="Gene3D" id="3.40.395.10">
    <property type="entry name" value="Adenoviral Proteinase, Chain A"/>
    <property type="match status" value="1"/>
</dbReference>
<dbReference type="HAMAP" id="MF_04059">
    <property type="entry name" value="ADV_PRO"/>
    <property type="match status" value="1"/>
</dbReference>
<dbReference type="InterPro" id="IPR038765">
    <property type="entry name" value="Papain-like_cys_pep_sf"/>
</dbReference>
<dbReference type="InterPro" id="IPR000855">
    <property type="entry name" value="Peptidase_C5"/>
</dbReference>
<dbReference type="Pfam" id="PF00770">
    <property type="entry name" value="Peptidase_C5"/>
    <property type="match status" value="1"/>
</dbReference>
<dbReference type="PIRSF" id="PIRSF001218">
    <property type="entry name" value="Protease_ADV"/>
    <property type="match status" value="1"/>
</dbReference>
<dbReference type="PRINTS" id="PR00703">
    <property type="entry name" value="ADVENDOPTASE"/>
</dbReference>
<dbReference type="SUPFAM" id="SSF54001">
    <property type="entry name" value="Cysteine proteinases"/>
    <property type="match status" value="1"/>
</dbReference>
<reference key="1">
    <citation type="submission" date="1995-12" db="EMBL/GenBank/DDBJ databases">
        <title>Codon usage differences among the protease genes of the phylogenetically closely related bovine adenovirus type 1, 2 and 3.</title>
        <authorList>
            <person name="Harrach B."/>
            <person name="Evans P."/>
            <person name="Rusvai M."/>
            <person name="Banrevi A."/>
            <person name="Letchworth G.J."/>
            <person name="Benko M."/>
        </authorList>
    </citation>
    <scope>NUCLEOTIDE SEQUENCE [GENOMIC DNA]</scope>
</reference>
<gene>
    <name evidence="1" type="primary">L3</name>
</gene>
<accession>Q96629</accession>
<evidence type="ECO:0000255" key="1">
    <source>
        <dbReference type="HAMAP-Rule" id="MF_04059"/>
    </source>
</evidence>